<dbReference type="EMBL" id="CP000716">
    <property type="protein sequence ID" value="ABR30120.1"/>
    <property type="molecule type" value="Genomic_DNA"/>
</dbReference>
<dbReference type="RefSeq" id="WP_012056481.1">
    <property type="nucleotide sequence ID" value="NC_009616.1"/>
</dbReference>
<dbReference type="SMR" id="A6LJL9"/>
<dbReference type="STRING" id="391009.Tmel_0246"/>
<dbReference type="KEGG" id="tme:Tmel_0246"/>
<dbReference type="eggNOG" id="COG1551">
    <property type="taxonomic scope" value="Bacteria"/>
</dbReference>
<dbReference type="HOGENOM" id="CLU_164837_0_1_0"/>
<dbReference type="OrthoDB" id="9809061at2"/>
<dbReference type="Proteomes" id="UP000001110">
    <property type="component" value="Chromosome"/>
</dbReference>
<dbReference type="GO" id="GO:0005829">
    <property type="term" value="C:cytosol"/>
    <property type="evidence" value="ECO:0007669"/>
    <property type="project" value="TreeGrafter"/>
</dbReference>
<dbReference type="GO" id="GO:0048027">
    <property type="term" value="F:mRNA 5'-UTR binding"/>
    <property type="evidence" value="ECO:0007669"/>
    <property type="project" value="UniProtKB-UniRule"/>
</dbReference>
<dbReference type="GO" id="GO:0044781">
    <property type="term" value="P:bacterial-type flagellum organization"/>
    <property type="evidence" value="ECO:0007669"/>
    <property type="project" value="UniProtKB-KW"/>
</dbReference>
<dbReference type="GO" id="GO:0006402">
    <property type="term" value="P:mRNA catabolic process"/>
    <property type="evidence" value="ECO:0007669"/>
    <property type="project" value="InterPro"/>
</dbReference>
<dbReference type="GO" id="GO:0045947">
    <property type="term" value="P:negative regulation of translational initiation"/>
    <property type="evidence" value="ECO:0007669"/>
    <property type="project" value="UniProtKB-UniRule"/>
</dbReference>
<dbReference type="GO" id="GO:1902208">
    <property type="term" value="P:regulation of bacterial-type flagellum assembly"/>
    <property type="evidence" value="ECO:0007669"/>
    <property type="project" value="UniProtKB-UniRule"/>
</dbReference>
<dbReference type="GO" id="GO:0006109">
    <property type="term" value="P:regulation of carbohydrate metabolic process"/>
    <property type="evidence" value="ECO:0007669"/>
    <property type="project" value="InterPro"/>
</dbReference>
<dbReference type="FunFam" id="2.60.40.4380:FF:000002">
    <property type="entry name" value="Translational regulator CsrA"/>
    <property type="match status" value="1"/>
</dbReference>
<dbReference type="Gene3D" id="2.60.40.4380">
    <property type="entry name" value="Translational regulator CsrA"/>
    <property type="match status" value="1"/>
</dbReference>
<dbReference type="HAMAP" id="MF_00167">
    <property type="entry name" value="CsrA"/>
    <property type="match status" value="1"/>
</dbReference>
<dbReference type="InterPro" id="IPR003751">
    <property type="entry name" value="CsrA"/>
</dbReference>
<dbReference type="InterPro" id="IPR036107">
    <property type="entry name" value="CsrA_sf"/>
</dbReference>
<dbReference type="NCBIfam" id="TIGR00202">
    <property type="entry name" value="csrA"/>
    <property type="match status" value="1"/>
</dbReference>
<dbReference type="NCBIfam" id="NF002469">
    <property type="entry name" value="PRK01712.1"/>
    <property type="match status" value="1"/>
</dbReference>
<dbReference type="PANTHER" id="PTHR34984">
    <property type="entry name" value="CARBON STORAGE REGULATOR"/>
    <property type="match status" value="1"/>
</dbReference>
<dbReference type="PANTHER" id="PTHR34984:SF1">
    <property type="entry name" value="CARBON STORAGE REGULATOR"/>
    <property type="match status" value="1"/>
</dbReference>
<dbReference type="Pfam" id="PF02599">
    <property type="entry name" value="CsrA"/>
    <property type="match status" value="1"/>
</dbReference>
<dbReference type="SUPFAM" id="SSF117130">
    <property type="entry name" value="CsrA-like"/>
    <property type="match status" value="1"/>
</dbReference>
<sequence>MLVLARKVGESIFIGNDVEVKILKIDGGEVKIGISAPKSVRILRKELYEEIMAENKKAIEFDIKDISEVSKFENR</sequence>
<evidence type="ECO:0000255" key="1">
    <source>
        <dbReference type="HAMAP-Rule" id="MF_00167"/>
    </source>
</evidence>
<accession>A6LJL9</accession>
<name>CSRA_THEM4</name>
<reference key="1">
    <citation type="submission" date="2007-05" db="EMBL/GenBank/DDBJ databases">
        <title>Complete sequence of Thermosipho melanesiensis BI429.</title>
        <authorList>
            <consortium name="US DOE Joint Genome Institute"/>
            <person name="Copeland A."/>
            <person name="Lucas S."/>
            <person name="Lapidus A."/>
            <person name="Barry K."/>
            <person name="Glavina del Rio T."/>
            <person name="Dalin E."/>
            <person name="Tice H."/>
            <person name="Pitluck S."/>
            <person name="Chertkov O."/>
            <person name="Brettin T."/>
            <person name="Bruce D."/>
            <person name="Detter J.C."/>
            <person name="Han C."/>
            <person name="Schmutz J."/>
            <person name="Larimer F."/>
            <person name="Land M."/>
            <person name="Hauser L."/>
            <person name="Kyrpides N."/>
            <person name="Mikhailova N."/>
            <person name="Nelson K."/>
            <person name="Gogarten J.P."/>
            <person name="Noll K."/>
            <person name="Richardson P."/>
        </authorList>
    </citation>
    <scope>NUCLEOTIDE SEQUENCE [LARGE SCALE GENOMIC DNA]</scope>
    <source>
        <strain>DSM 12029 / CIP 104789 / BI429</strain>
    </source>
</reference>
<proteinExistence type="inferred from homology"/>
<feature type="chain" id="PRO_1000023433" description="Translational regulator CsrA">
    <location>
        <begin position="1"/>
        <end position="75"/>
    </location>
</feature>
<keyword id="KW-1005">Bacterial flagellum biogenesis</keyword>
<keyword id="KW-0963">Cytoplasm</keyword>
<keyword id="KW-0678">Repressor</keyword>
<keyword id="KW-0694">RNA-binding</keyword>
<keyword id="KW-0810">Translation regulation</keyword>
<gene>
    <name evidence="1" type="primary">csrA</name>
    <name type="ordered locus">Tmel_0246</name>
</gene>
<protein>
    <recommendedName>
        <fullName evidence="1">Translational regulator CsrA</fullName>
    </recommendedName>
</protein>
<comment type="function">
    <text evidence="1">A translational regulator that binds mRNA to regulate translation initiation and/or mRNA stability. Usually binds in the 5'-UTR at or near the Shine-Dalgarno sequence preventing ribosome-binding, thus repressing translation. Its main target seems to be the major flagellin gene, while its function is anatagonized by FliW.</text>
</comment>
<comment type="subunit">
    <text evidence="1">Homodimer; the beta-strands of each monomer intercalate to form a hydrophobic core, while the alpha-helices form wings that extend away from the core.</text>
</comment>
<comment type="subcellular location">
    <subcellularLocation>
        <location evidence="1">Cytoplasm</location>
    </subcellularLocation>
</comment>
<comment type="similarity">
    <text evidence="1">Belongs to the CsrA/RsmA family.</text>
</comment>
<organism>
    <name type="scientific">Thermosipho melanesiensis (strain DSM 12029 / CIP 104789 / BI429)</name>
    <dbReference type="NCBI Taxonomy" id="391009"/>
    <lineage>
        <taxon>Bacteria</taxon>
        <taxon>Thermotogati</taxon>
        <taxon>Thermotogota</taxon>
        <taxon>Thermotogae</taxon>
        <taxon>Thermotogales</taxon>
        <taxon>Fervidobacteriaceae</taxon>
        <taxon>Thermosipho</taxon>
    </lineage>
</organism>